<dbReference type="EC" id="4.4.1.21" evidence="1"/>
<dbReference type="EMBL" id="CP001113">
    <property type="protein sequence ID" value="ACF65502.1"/>
    <property type="molecule type" value="Genomic_DNA"/>
</dbReference>
<dbReference type="RefSeq" id="WP_001130194.1">
    <property type="nucleotide sequence ID" value="NZ_CCMR01000001.1"/>
</dbReference>
<dbReference type="SMR" id="B4T393"/>
<dbReference type="KEGG" id="see:SNSL254_A3018"/>
<dbReference type="HOGENOM" id="CLU_107531_2_0_6"/>
<dbReference type="Proteomes" id="UP000008824">
    <property type="component" value="Chromosome"/>
</dbReference>
<dbReference type="GO" id="GO:0005506">
    <property type="term" value="F:iron ion binding"/>
    <property type="evidence" value="ECO:0007669"/>
    <property type="project" value="InterPro"/>
</dbReference>
<dbReference type="GO" id="GO:0043768">
    <property type="term" value="F:S-ribosylhomocysteine lyase activity"/>
    <property type="evidence" value="ECO:0007669"/>
    <property type="project" value="UniProtKB-UniRule"/>
</dbReference>
<dbReference type="GO" id="GO:0009372">
    <property type="term" value="P:quorum sensing"/>
    <property type="evidence" value="ECO:0007669"/>
    <property type="project" value="UniProtKB-UniRule"/>
</dbReference>
<dbReference type="FunFam" id="3.30.1360.80:FF:000001">
    <property type="entry name" value="S-ribosylhomocysteine lyase"/>
    <property type="match status" value="1"/>
</dbReference>
<dbReference type="Gene3D" id="3.30.1360.80">
    <property type="entry name" value="S-ribosylhomocysteinase (LuxS)"/>
    <property type="match status" value="1"/>
</dbReference>
<dbReference type="HAMAP" id="MF_00091">
    <property type="entry name" value="LuxS"/>
    <property type="match status" value="1"/>
</dbReference>
<dbReference type="InterPro" id="IPR037005">
    <property type="entry name" value="LuxS_sf"/>
</dbReference>
<dbReference type="InterPro" id="IPR011249">
    <property type="entry name" value="Metalloenz_LuxS/M16"/>
</dbReference>
<dbReference type="InterPro" id="IPR003815">
    <property type="entry name" value="S-ribosylhomocysteinase"/>
</dbReference>
<dbReference type="NCBIfam" id="NF002602">
    <property type="entry name" value="PRK02260.1-2"/>
    <property type="match status" value="1"/>
</dbReference>
<dbReference type="PANTHER" id="PTHR35799">
    <property type="entry name" value="S-RIBOSYLHOMOCYSTEINE LYASE"/>
    <property type="match status" value="1"/>
</dbReference>
<dbReference type="PANTHER" id="PTHR35799:SF1">
    <property type="entry name" value="S-RIBOSYLHOMOCYSTEINE LYASE"/>
    <property type="match status" value="1"/>
</dbReference>
<dbReference type="Pfam" id="PF02664">
    <property type="entry name" value="LuxS"/>
    <property type="match status" value="1"/>
</dbReference>
<dbReference type="PIRSF" id="PIRSF006160">
    <property type="entry name" value="AI2"/>
    <property type="match status" value="1"/>
</dbReference>
<dbReference type="PRINTS" id="PR01487">
    <property type="entry name" value="LUXSPROTEIN"/>
</dbReference>
<dbReference type="SUPFAM" id="SSF63411">
    <property type="entry name" value="LuxS/MPP-like metallohydrolase"/>
    <property type="match status" value="1"/>
</dbReference>
<feature type="chain" id="PRO_1000093325" description="S-ribosylhomocysteine lyase">
    <location>
        <begin position="1"/>
        <end position="171"/>
    </location>
</feature>
<feature type="binding site" evidence="1">
    <location>
        <position position="54"/>
    </location>
    <ligand>
        <name>Fe cation</name>
        <dbReference type="ChEBI" id="CHEBI:24875"/>
    </ligand>
</feature>
<feature type="binding site" evidence="1">
    <location>
        <position position="58"/>
    </location>
    <ligand>
        <name>Fe cation</name>
        <dbReference type="ChEBI" id="CHEBI:24875"/>
    </ligand>
</feature>
<feature type="binding site" evidence="1">
    <location>
        <position position="128"/>
    </location>
    <ligand>
        <name>Fe cation</name>
        <dbReference type="ChEBI" id="CHEBI:24875"/>
    </ligand>
</feature>
<evidence type="ECO:0000255" key="1">
    <source>
        <dbReference type="HAMAP-Rule" id="MF_00091"/>
    </source>
</evidence>
<reference key="1">
    <citation type="journal article" date="2011" name="J. Bacteriol.">
        <title>Comparative genomics of 28 Salmonella enterica isolates: evidence for CRISPR-mediated adaptive sublineage evolution.</title>
        <authorList>
            <person name="Fricke W.F."/>
            <person name="Mammel M.K."/>
            <person name="McDermott P.F."/>
            <person name="Tartera C."/>
            <person name="White D.G."/>
            <person name="Leclerc J.E."/>
            <person name="Ravel J."/>
            <person name="Cebula T.A."/>
        </authorList>
    </citation>
    <scope>NUCLEOTIDE SEQUENCE [LARGE SCALE GENOMIC DNA]</scope>
    <source>
        <strain>SL254</strain>
    </source>
</reference>
<name>LUXS_SALNS</name>
<proteinExistence type="inferred from homology"/>
<keyword id="KW-0071">Autoinducer synthesis</keyword>
<keyword id="KW-0408">Iron</keyword>
<keyword id="KW-0456">Lyase</keyword>
<keyword id="KW-0479">Metal-binding</keyword>
<keyword id="KW-0673">Quorum sensing</keyword>
<organism>
    <name type="scientific">Salmonella newport (strain SL254)</name>
    <dbReference type="NCBI Taxonomy" id="423368"/>
    <lineage>
        <taxon>Bacteria</taxon>
        <taxon>Pseudomonadati</taxon>
        <taxon>Pseudomonadota</taxon>
        <taxon>Gammaproteobacteria</taxon>
        <taxon>Enterobacterales</taxon>
        <taxon>Enterobacteriaceae</taxon>
        <taxon>Salmonella</taxon>
    </lineage>
</organism>
<sequence>MPLLDSFAVDHTRMQAPAVRVAKTMNTPHGDAITVFDLRFCIPNKEVMPEKGIHTLEHLFAGFMRDHLNGNGVEIIDISPMGCRTGFYMSLIGTPDEQRVADAWKAAMADVLKVQDQNQIPELNVYQCGTYQMHSLSEAQDIARHILERDVRVNSNKELALPKEKLQELHI</sequence>
<accession>B4T393</accession>
<comment type="function">
    <text evidence="1">Involved in the synthesis of autoinducer 2 (AI-2) which is secreted by bacteria and is used to communicate both the cell density and the metabolic potential of the environment. The regulation of gene expression in response to changes in cell density is called quorum sensing. Catalyzes the transformation of S-ribosylhomocysteine (RHC) to homocysteine (HC) and 4,5-dihydroxy-2,3-pentadione (DPD).</text>
</comment>
<comment type="catalytic activity">
    <reaction evidence="1">
        <text>S-(5-deoxy-D-ribos-5-yl)-L-homocysteine = (S)-4,5-dihydroxypentane-2,3-dione + L-homocysteine</text>
        <dbReference type="Rhea" id="RHEA:17753"/>
        <dbReference type="ChEBI" id="CHEBI:29484"/>
        <dbReference type="ChEBI" id="CHEBI:58195"/>
        <dbReference type="ChEBI" id="CHEBI:58199"/>
        <dbReference type="EC" id="4.4.1.21"/>
    </reaction>
</comment>
<comment type="cofactor">
    <cofactor evidence="1">
        <name>Fe cation</name>
        <dbReference type="ChEBI" id="CHEBI:24875"/>
    </cofactor>
    <text evidence="1">Binds 1 Fe cation per subunit.</text>
</comment>
<comment type="subunit">
    <text evidence="1">Homodimer.</text>
</comment>
<comment type="similarity">
    <text evidence="1">Belongs to the LuxS family.</text>
</comment>
<gene>
    <name evidence="1" type="primary">luxS</name>
    <name type="ordered locus">SNSL254_A3018</name>
</gene>
<protein>
    <recommendedName>
        <fullName evidence="1">S-ribosylhomocysteine lyase</fullName>
        <ecNumber evidence="1">4.4.1.21</ecNumber>
    </recommendedName>
    <alternativeName>
        <fullName evidence="1">AI-2 synthesis protein</fullName>
    </alternativeName>
    <alternativeName>
        <fullName evidence="1">Autoinducer-2 production protein LuxS</fullName>
    </alternativeName>
</protein>